<organism>
    <name type="scientific">Chlorobium luteolum (strain DSM 273 / BCRC 81028 / 2530)</name>
    <name type="common">Pelodictyon luteolum</name>
    <dbReference type="NCBI Taxonomy" id="319225"/>
    <lineage>
        <taxon>Bacteria</taxon>
        <taxon>Pseudomonadati</taxon>
        <taxon>Chlorobiota</taxon>
        <taxon>Chlorobiia</taxon>
        <taxon>Chlorobiales</taxon>
        <taxon>Chlorobiaceae</taxon>
        <taxon>Chlorobium/Pelodictyon group</taxon>
        <taxon>Pelodictyon</taxon>
    </lineage>
</organism>
<dbReference type="EC" id="2.4.2.7" evidence="1"/>
<dbReference type="EMBL" id="CP000096">
    <property type="protein sequence ID" value="ABB24581.1"/>
    <property type="molecule type" value="Genomic_DNA"/>
</dbReference>
<dbReference type="RefSeq" id="WP_011358453.1">
    <property type="nucleotide sequence ID" value="NC_007512.1"/>
</dbReference>
<dbReference type="SMR" id="Q3B250"/>
<dbReference type="STRING" id="319225.Plut_1727"/>
<dbReference type="KEGG" id="plt:Plut_1727"/>
<dbReference type="eggNOG" id="COG0503">
    <property type="taxonomic scope" value="Bacteria"/>
</dbReference>
<dbReference type="HOGENOM" id="CLU_063339_3_0_10"/>
<dbReference type="OrthoDB" id="9803963at2"/>
<dbReference type="UniPathway" id="UPA00588">
    <property type="reaction ID" value="UER00646"/>
</dbReference>
<dbReference type="Proteomes" id="UP000002709">
    <property type="component" value="Chromosome"/>
</dbReference>
<dbReference type="GO" id="GO:0005737">
    <property type="term" value="C:cytoplasm"/>
    <property type="evidence" value="ECO:0007669"/>
    <property type="project" value="UniProtKB-SubCell"/>
</dbReference>
<dbReference type="GO" id="GO:0002055">
    <property type="term" value="F:adenine binding"/>
    <property type="evidence" value="ECO:0007669"/>
    <property type="project" value="TreeGrafter"/>
</dbReference>
<dbReference type="GO" id="GO:0003999">
    <property type="term" value="F:adenine phosphoribosyltransferase activity"/>
    <property type="evidence" value="ECO:0007669"/>
    <property type="project" value="UniProtKB-UniRule"/>
</dbReference>
<dbReference type="GO" id="GO:0016208">
    <property type="term" value="F:AMP binding"/>
    <property type="evidence" value="ECO:0007669"/>
    <property type="project" value="TreeGrafter"/>
</dbReference>
<dbReference type="GO" id="GO:0006168">
    <property type="term" value="P:adenine salvage"/>
    <property type="evidence" value="ECO:0007669"/>
    <property type="project" value="InterPro"/>
</dbReference>
<dbReference type="GO" id="GO:0044209">
    <property type="term" value="P:AMP salvage"/>
    <property type="evidence" value="ECO:0007669"/>
    <property type="project" value="UniProtKB-UniRule"/>
</dbReference>
<dbReference type="GO" id="GO:0006166">
    <property type="term" value="P:purine ribonucleoside salvage"/>
    <property type="evidence" value="ECO:0007669"/>
    <property type="project" value="UniProtKB-KW"/>
</dbReference>
<dbReference type="CDD" id="cd06223">
    <property type="entry name" value="PRTases_typeI"/>
    <property type="match status" value="1"/>
</dbReference>
<dbReference type="FunFam" id="3.40.50.2020:FF:000021">
    <property type="entry name" value="Adenine phosphoribosyltransferase"/>
    <property type="match status" value="1"/>
</dbReference>
<dbReference type="Gene3D" id="3.40.50.2020">
    <property type="match status" value="1"/>
</dbReference>
<dbReference type="HAMAP" id="MF_00004">
    <property type="entry name" value="Aden_phosphoribosyltr"/>
    <property type="match status" value="1"/>
</dbReference>
<dbReference type="InterPro" id="IPR005764">
    <property type="entry name" value="Ade_phspho_trans"/>
</dbReference>
<dbReference type="InterPro" id="IPR000836">
    <property type="entry name" value="PRibTrfase_dom"/>
</dbReference>
<dbReference type="InterPro" id="IPR029057">
    <property type="entry name" value="PRTase-like"/>
</dbReference>
<dbReference type="InterPro" id="IPR050054">
    <property type="entry name" value="UPRTase/APRTase"/>
</dbReference>
<dbReference type="NCBIfam" id="TIGR01090">
    <property type="entry name" value="apt"/>
    <property type="match status" value="1"/>
</dbReference>
<dbReference type="NCBIfam" id="NF002634">
    <property type="entry name" value="PRK02304.1-3"/>
    <property type="match status" value="1"/>
</dbReference>
<dbReference type="NCBIfam" id="NF002636">
    <property type="entry name" value="PRK02304.1-5"/>
    <property type="match status" value="1"/>
</dbReference>
<dbReference type="PANTHER" id="PTHR32315">
    <property type="entry name" value="ADENINE PHOSPHORIBOSYLTRANSFERASE"/>
    <property type="match status" value="1"/>
</dbReference>
<dbReference type="PANTHER" id="PTHR32315:SF3">
    <property type="entry name" value="ADENINE PHOSPHORIBOSYLTRANSFERASE"/>
    <property type="match status" value="1"/>
</dbReference>
<dbReference type="Pfam" id="PF00156">
    <property type="entry name" value="Pribosyltran"/>
    <property type="match status" value="1"/>
</dbReference>
<dbReference type="SUPFAM" id="SSF53271">
    <property type="entry name" value="PRTase-like"/>
    <property type="match status" value="1"/>
</dbReference>
<dbReference type="PROSITE" id="PS00103">
    <property type="entry name" value="PUR_PYR_PR_TRANSFER"/>
    <property type="match status" value="1"/>
</dbReference>
<keyword id="KW-0963">Cytoplasm</keyword>
<keyword id="KW-0328">Glycosyltransferase</keyword>
<keyword id="KW-0660">Purine salvage</keyword>
<keyword id="KW-1185">Reference proteome</keyword>
<keyword id="KW-0808">Transferase</keyword>
<gene>
    <name evidence="1" type="primary">apt</name>
    <name type="ordered locus">Plut_1727</name>
</gene>
<evidence type="ECO:0000255" key="1">
    <source>
        <dbReference type="HAMAP-Rule" id="MF_00004"/>
    </source>
</evidence>
<feature type="chain" id="PRO_1000000319" description="Adenine phosphoribosyltransferase">
    <location>
        <begin position="1"/>
        <end position="177"/>
    </location>
</feature>
<protein>
    <recommendedName>
        <fullName evidence="1">Adenine phosphoribosyltransferase</fullName>
        <shortName evidence="1">APRT</shortName>
        <ecNumber evidence="1">2.4.2.7</ecNumber>
    </recommendedName>
</protein>
<accession>Q3B250</accession>
<name>APT_CHLL3</name>
<comment type="function">
    <text evidence="1">Catalyzes a salvage reaction resulting in the formation of AMP, that is energically less costly than de novo synthesis.</text>
</comment>
<comment type="catalytic activity">
    <reaction evidence="1">
        <text>AMP + diphosphate = 5-phospho-alpha-D-ribose 1-diphosphate + adenine</text>
        <dbReference type="Rhea" id="RHEA:16609"/>
        <dbReference type="ChEBI" id="CHEBI:16708"/>
        <dbReference type="ChEBI" id="CHEBI:33019"/>
        <dbReference type="ChEBI" id="CHEBI:58017"/>
        <dbReference type="ChEBI" id="CHEBI:456215"/>
        <dbReference type="EC" id="2.4.2.7"/>
    </reaction>
</comment>
<comment type="pathway">
    <text evidence="1">Purine metabolism; AMP biosynthesis via salvage pathway; AMP from adenine: step 1/1.</text>
</comment>
<comment type="subunit">
    <text evidence="1">Homodimer.</text>
</comment>
<comment type="subcellular location">
    <subcellularLocation>
        <location evidence="1">Cytoplasm</location>
    </subcellularLocation>
</comment>
<comment type="similarity">
    <text evidence="1">Belongs to the purine/pyrimidine phosphoribosyltransferase family.</text>
</comment>
<proteinExistence type="inferred from homology"/>
<sequence>MPIKSRIRAIPDYPKKGIMFRDITTLIKDPVGFRLVIDNLTQRYLENGVDFDVIVGIEARGFIIGSALAYALGKGFVPVRKPGKLPADTVSQEYALEYGTDKIEIHIDALEKGARVLLVDDLLATGGTALAAAPLIEKVGGVVSEMAFIVNLPDIGGEEKILAKGYKVFSLTAFEGE</sequence>
<reference key="1">
    <citation type="submission" date="2005-08" db="EMBL/GenBank/DDBJ databases">
        <title>Complete sequence of Pelodictyon luteolum DSM 273.</title>
        <authorList>
            <consortium name="US DOE Joint Genome Institute"/>
            <person name="Copeland A."/>
            <person name="Lucas S."/>
            <person name="Lapidus A."/>
            <person name="Barry K."/>
            <person name="Detter J.C."/>
            <person name="Glavina T."/>
            <person name="Hammon N."/>
            <person name="Israni S."/>
            <person name="Pitluck S."/>
            <person name="Bryant D."/>
            <person name="Schmutz J."/>
            <person name="Larimer F."/>
            <person name="Land M."/>
            <person name="Kyrpides N."/>
            <person name="Ivanova N."/>
            <person name="Richardson P."/>
        </authorList>
    </citation>
    <scope>NUCLEOTIDE SEQUENCE [LARGE SCALE GENOMIC DNA]</scope>
    <source>
        <strain>DSM 273 / BCRC 81028 / 2530</strain>
    </source>
</reference>